<reference key="1">
    <citation type="journal article" date="2005" name="Mol. Cell. Proteomics">
        <title>Dissecting the axoneme interactome: the mammalian orthologue of Chlamydomonas PF6 interacts with sperm-associated antigen 6, the mammalian orthologue of Chlamydomonas PF16.</title>
        <authorList>
            <person name="Zhang Z."/>
            <person name="Jones B.H."/>
            <person name="Tang W."/>
            <person name="Moss S.B."/>
            <person name="Wei Z."/>
            <person name="Ho C."/>
            <person name="Pollack M."/>
            <person name="Horowitz E."/>
            <person name="Bennett J."/>
            <person name="Baker M.E."/>
            <person name="Strauss J.F. III"/>
        </authorList>
    </citation>
    <scope>NUCLEOTIDE SEQUENCE [MRNA]</scope>
    <scope>FUNCTION</scope>
    <scope>INTERACTION WITH SPAG6</scope>
    <scope>SUBCELLULAR LOCATION</scope>
    <scope>TISSUE SPECIFICITY</scope>
    <scope>DEVELOPMENTAL STAGE</scope>
</reference>
<reference key="2">
    <citation type="journal article" date="2009" name="PLoS Biol.">
        <title>Lineage-specific biology revealed by a finished genome assembly of the mouse.</title>
        <authorList>
            <person name="Church D.M."/>
            <person name="Goodstadt L."/>
            <person name="Hillier L.W."/>
            <person name="Zody M.C."/>
            <person name="Goldstein S."/>
            <person name="She X."/>
            <person name="Bult C.J."/>
            <person name="Agarwala R."/>
            <person name="Cherry J.L."/>
            <person name="DiCuccio M."/>
            <person name="Hlavina W."/>
            <person name="Kapustin Y."/>
            <person name="Meric P."/>
            <person name="Maglott D."/>
            <person name="Birtle Z."/>
            <person name="Marques A.C."/>
            <person name="Graves T."/>
            <person name="Zhou S."/>
            <person name="Teague B."/>
            <person name="Potamousis K."/>
            <person name="Churas C."/>
            <person name="Place M."/>
            <person name="Herschleb J."/>
            <person name="Runnheim R."/>
            <person name="Forrest D."/>
            <person name="Amos-Landgraf J."/>
            <person name="Schwartz D.C."/>
            <person name="Cheng Z."/>
            <person name="Lindblad-Toh K."/>
            <person name="Eichler E.E."/>
            <person name="Ponting C.P."/>
        </authorList>
    </citation>
    <scope>NUCLEOTIDE SEQUENCE [LARGE SCALE GENOMIC DNA]</scope>
    <source>
        <strain evidence="9">C57BL/6J</strain>
    </source>
</reference>
<reference key="3">
    <citation type="journal article" date="2005" name="Science">
        <title>The transcriptional landscape of the mammalian genome.</title>
        <authorList>
            <person name="Carninci P."/>
            <person name="Kasukawa T."/>
            <person name="Katayama S."/>
            <person name="Gough J."/>
            <person name="Frith M.C."/>
            <person name="Maeda N."/>
            <person name="Oyama R."/>
            <person name="Ravasi T."/>
            <person name="Lenhard B."/>
            <person name="Wells C."/>
            <person name="Kodzius R."/>
            <person name="Shimokawa K."/>
            <person name="Bajic V.B."/>
            <person name="Brenner S.E."/>
            <person name="Batalov S."/>
            <person name="Forrest A.R."/>
            <person name="Zavolan M."/>
            <person name="Davis M.J."/>
            <person name="Wilming L.G."/>
            <person name="Aidinis V."/>
            <person name="Allen J.E."/>
            <person name="Ambesi-Impiombato A."/>
            <person name="Apweiler R."/>
            <person name="Aturaliya R.N."/>
            <person name="Bailey T.L."/>
            <person name="Bansal M."/>
            <person name="Baxter L."/>
            <person name="Beisel K.W."/>
            <person name="Bersano T."/>
            <person name="Bono H."/>
            <person name="Chalk A.M."/>
            <person name="Chiu K.P."/>
            <person name="Choudhary V."/>
            <person name="Christoffels A."/>
            <person name="Clutterbuck D.R."/>
            <person name="Crowe M.L."/>
            <person name="Dalla E."/>
            <person name="Dalrymple B.P."/>
            <person name="de Bono B."/>
            <person name="Della Gatta G."/>
            <person name="di Bernardo D."/>
            <person name="Down T."/>
            <person name="Engstrom P."/>
            <person name="Fagiolini M."/>
            <person name="Faulkner G."/>
            <person name="Fletcher C.F."/>
            <person name="Fukushima T."/>
            <person name="Furuno M."/>
            <person name="Futaki S."/>
            <person name="Gariboldi M."/>
            <person name="Georgii-Hemming P."/>
            <person name="Gingeras T.R."/>
            <person name="Gojobori T."/>
            <person name="Green R.E."/>
            <person name="Gustincich S."/>
            <person name="Harbers M."/>
            <person name="Hayashi Y."/>
            <person name="Hensch T.K."/>
            <person name="Hirokawa N."/>
            <person name="Hill D."/>
            <person name="Huminiecki L."/>
            <person name="Iacono M."/>
            <person name="Ikeo K."/>
            <person name="Iwama A."/>
            <person name="Ishikawa T."/>
            <person name="Jakt M."/>
            <person name="Kanapin A."/>
            <person name="Katoh M."/>
            <person name="Kawasawa Y."/>
            <person name="Kelso J."/>
            <person name="Kitamura H."/>
            <person name="Kitano H."/>
            <person name="Kollias G."/>
            <person name="Krishnan S.P."/>
            <person name="Kruger A."/>
            <person name="Kummerfeld S.K."/>
            <person name="Kurochkin I.V."/>
            <person name="Lareau L.F."/>
            <person name="Lazarevic D."/>
            <person name="Lipovich L."/>
            <person name="Liu J."/>
            <person name="Liuni S."/>
            <person name="McWilliam S."/>
            <person name="Madan Babu M."/>
            <person name="Madera M."/>
            <person name="Marchionni L."/>
            <person name="Matsuda H."/>
            <person name="Matsuzawa S."/>
            <person name="Miki H."/>
            <person name="Mignone F."/>
            <person name="Miyake S."/>
            <person name="Morris K."/>
            <person name="Mottagui-Tabar S."/>
            <person name="Mulder N."/>
            <person name="Nakano N."/>
            <person name="Nakauchi H."/>
            <person name="Ng P."/>
            <person name="Nilsson R."/>
            <person name="Nishiguchi S."/>
            <person name="Nishikawa S."/>
            <person name="Nori F."/>
            <person name="Ohara O."/>
            <person name="Okazaki Y."/>
            <person name="Orlando V."/>
            <person name="Pang K.C."/>
            <person name="Pavan W.J."/>
            <person name="Pavesi G."/>
            <person name="Pesole G."/>
            <person name="Petrovsky N."/>
            <person name="Piazza S."/>
            <person name="Reed J."/>
            <person name="Reid J.F."/>
            <person name="Ring B.Z."/>
            <person name="Ringwald M."/>
            <person name="Rost B."/>
            <person name="Ruan Y."/>
            <person name="Salzberg S.L."/>
            <person name="Sandelin A."/>
            <person name="Schneider C."/>
            <person name="Schoenbach C."/>
            <person name="Sekiguchi K."/>
            <person name="Semple C.A."/>
            <person name="Seno S."/>
            <person name="Sessa L."/>
            <person name="Sheng Y."/>
            <person name="Shibata Y."/>
            <person name="Shimada H."/>
            <person name="Shimada K."/>
            <person name="Silva D."/>
            <person name="Sinclair B."/>
            <person name="Sperling S."/>
            <person name="Stupka E."/>
            <person name="Sugiura K."/>
            <person name="Sultana R."/>
            <person name="Takenaka Y."/>
            <person name="Taki K."/>
            <person name="Tammoja K."/>
            <person name="Tan S.L."/>
            <person name="Tang S."/>
            <person name="Taylor M.S."/>
            <person name="Tegner J."/>
            <person name="Teichmann S.A."/>
            <person name="Ueda H.R."/>
            <person name="van Nimwegen E."/>
            <person name="Verardo R."/>
            <person name="Wei C.L."/>
            <person name="Yagi K."/>
            <person name="Yamanishi H."/>
            <person name="Zabarovsky E."/>
            <person name="Zhu S."/>
            <person name="Zimmer A."/>
            <person name="Hide W."/>
            <person name="Bult C."/>
            <person name="Grimmond S.M."/>
            <person name="Teasdale R.D."/>
            <person name="Liu E.T."/>
            <person name="Brusic V."/>
            <person name="Quackenbush J."/>
            <person name="Wahlestedt C."/>
            <person name="Mattick J.S."/>
            <person name="Hume D.A."/>
            <person name="Kai C."/>
            <person name="Sasaki D."/>
            <person name="Tomaru Y."/>
            <person name="Fukuda S."/>
            <person name="Kanamori-Katayama M."/>
            <person name="Suzuki M."/>
            <person name="Aoki J."/>
            <person name="Arakawa T."/>
            <person name="Iida J."/>
            <person name="Imamura K."/>
            <person name="Itoh M."/>
            <person name="Kato T."/>
            <person name="Kawaji H."/>
            <person name="Kawagashira N."/>
            <person name="Kawashima T."/>
            <person name="Kojima M."/>
            <person name="Kondo S."/>
            <person name="Konno H."/>
            <person name="Nakano K."/>
            <person name="Ninomiya N."/>
            <person name="Nishio T."/>
            <person name="Okada M."/>
            <person name="Plessy C."/>
            <person name="Shibata K."/>
            <person name="Shiraki T."/>
            <person name="Suzuki S."/>
            <person name="Tagami M."/>
            <person name="Waki K."/>
            <person name="Watahiki A."/>
            <person name="Okamura-Oho Y."/>
            <person name="Suzuki H."/>
            <person name="Kawai J."/>
            <person name="Hayashizaki Y."/>
        </authorList>
    </citation>
    <scope>NUCLEOTIDE SEQUENCE [LARGE SCALE MRNA] OF 1-939 AND 1808-2320</scope>
    <source>
        <strain>C57BL/6J</strain>
        <tissue>Lung</tissue>
        <tissue>Testis</tissue>
    </source>
</reference>
<reference key="4">
    <citation type="journal article" date="2010" name="Cell">
        <title>A tissue-specific atlas of mouse protein phosphorylation and expression.</title>
        <authorList>
            <person name="Huttlin E.L."/>
            <person name="Jedrychowski M.P."/>
            <person name="Elias J.E."/>
            <person name="Goswami T."/>
            <person name="Rad R."/>
            <person name="Beausoleil S.A."/>
            <person name="Villen J."/>
            <person name="Haas W."/>
            <person name="Sowa M.E."/>
            <person name="Gygi S.P."/>
        </authorList>
    </citation>
    <scope>IDENTIFICATION BY MASS SPECTROMETRY [LARGE SCALE ANALYSIS]</scope>
    <source>
        <tissue>Testis</tissue>
    </source>
</reference>
<reference key="5">
    <citation type="journal article" date="2013" name="Am. J. Respir. Cell Mol. Biol.">
        <title>Sperm-associated antigen-17 gene is essential for motile cilia function and neonatal survival.</title>
        <authorList>
            <person name="Teves M.E."/>
            <person name="Zhang Z."/>
            <person name="Costanzo R.M."/>
            <person name="Henderson S.C."/>
            <person name="Corwin F.D."/>
            <person name="Zweit J."/>
            <person name="Sundaresan G."/>
            <person name="Subler M."/>
            <person name="Salloum F.N."/>
            <person name="Rubin B.K."/>
            <person name="Strauss J.F. III"/>
        </authorList>
    </citation>
    <scope>DISRUPTION PHENOTYPE</scope>
    <scope>FUNCTION</scope>
</reference>
<reference key="6">
    <citation type="journal article" date="2015" name="PLoS ONE">
        <title>Spag17 deficiency results in skeletal malformations and bone abnormalities.</title>
        <authorList>
            <person name="Teves M.E."/>
            <person name="Sundaresan G."/>
            <person name="Cohen D.J."/>
            <person name="Hyzy S.L."/>
            <person name="Kajan I."/>
            <person name="Maczis M."/>
            <person name="Zhang Z."/>
            <person name="Costanzo R.M."/>
            <person name="Zweit J."/>
            <person name="Schwartz Z."/>
            <person name="Boyan B.D."/>
            <person name="Strauss J.F. III"/>
        </authorList>
    </citation>
    <scope>FUNCTION</scope>
    <scope>DISRUPTION PHENOTYPE</scope>
    <scope>TISSUE SPECIFICITY</scope>
</reference>
<reference key="7">
    <citation type="journal article" date="2018" name="Int. J. Mol. Sci.">
        <title>SPAG17 Is Required for Male Germ Cell Differentiation and Fertility.</title>
        <authorList>
            <person name="Kazarian E."/>
            <person name="Son H."/>
            <person name="Sapao P."/>
            <person name="Li W."/>
            <person name="Zhang Z."/>
            <person name="Strauss J.F."/>
            <person name="Teves M.E."/>
        </authorList>
    </citation>
    <scope>FUNCTION</scope>
    <scope>SUBCELLULAR LOCATION</scope>
    <scope>TISSUE SPECIFICITY</scope>
    <scope>DISRUPTION PHENOTYPE</scope>
</reference>
<reference key="8">
    <citation type="journal article" date="2020" name="Dis. Model. Mech.">
        <title>A novel hypomorphic allele of Spag17 causes primary ciliary dyskinesia phenotypes in mice.</title>
        <authorList>
            <person name="Abdelhamed Z."/>
            <person name="Lukacs M."/>
            <person name="Cindric S."/>
            <person name="Ali S."/>
            <person name="Omran H."/>
            <person name="Stottmann R.W."/>
        </authorList>
    </citation>
    <scope>FUNCTION</scope>
    <scope>TISSUE SPECIFICITY</scope>
    <scope>DISEASE</scope>
    <scope>VARIANT PCDO 1746-LYS--HIS-2320 DEL</scope>
    <scope>CHARACTERIZATION OF VARIANT PCDO 1746-LYS--HIS-2320 DEL</scope>
</reference>
<protein>
    <recommendedName>
        <fullName>Sperm-associated antigen 17</fullName>
    </recommendedName>
    <alternativeName>
        <fullName>Projection protein PF6 homolog</fullName>
    </alternativeName>
</protein>
<name>SPG17_MOUSE</name>
<organism>
    <name type="scientific">Mus musculus</name>
    <name type="common">Mouse</name>
    <dbReference type="NCBI Taxonomy" id="10090"/>
    <lineage>
        <taxon>Eukaryota</taxon>
        <taxon>Metazoa</taxon>
        <taxon>Chordata</taxon>
        <taxon>Craniata</taxon>
        <taxon>Vertebrata</taxon>
        <taxon>Euteleostomi</taxon>
        <taxon>Mammalia</taxon>
        <taxon>Eutheria</taxon>
        <taxon>Euarchontoglires</taxon>
        <taxon>Glires</taxon>
        <taxon>Rodentia</taxon>
        <taxon>Myomorpha</taxon>
        <taxon>Muroidea</taxon>
        <taxon>Muridae</taxon>
        <taxon>Murinae</taxon>
        <taxon>Mus</taxon>
        <taxon>Mus</taxon>
    </lineage>
</organism>
<accession>Q5S003</accession>
<accession>G3UYF7</accession>
<accession>Q3UWG8</accession>
<accession>Q6Q758</accession>
<accession>Q8CDR5</accession>
<accession>Q9CUE5</accession>
<gene>
    <name type="primary">Spag17</name>
</gene>
<comment type="function">
    <text evidence="3 4 5 6 7">Component of the central pair apparatus of ciliary axonemes. Plays a critical role in the function and structure of motile cilia (PubMed:15827353, PubMed:23418344). May play a role in endochondral bone formation, most likely because of a function in primary cilia of chondrocytes and osteoblasts (PubMed:26017218). Essential for normal spermatogenesis and male fertility (PubMed:29690537). Required for normal manchette structure, transport of proteins along the manchette microtubules and formation of the sperm head and flagellum (PubMed:29690537). Essential for sperm flagellum development and proper assembly of the respiratory motile cilia central pair apparatus, but not the brain ependymal cilia (PubMed:32988999).</text>
</comment>
<comment type="subunit">
    <text evidence="3">Interacts (via the C-terminus) with SPAG6; the interaction probably occurs on polymerized microtubules.</text>
</comment>
<comment type="interaction">
    <interactant intactId="EBI-1783665">
        <id>Q5S003</id>
    </interactant>
    <interactant intactId="EBI-1783654">
        <id>Q9JLI7</id>
        <label>Spag6</label>
    </interactant>
    <organismsDiffer>false</organismsDiffer>
    <experiments>3</experiments>
</comment>
<comment type="subcellular location">
    <subcellularLocation>
        <location evidence="3 6">Cytoplasm</location>
    </subcellularLocation>
    <subcellularLocation>
        <location evidence="3">Cytoplasm</location>
        <location evidence="3">Cytoskeleton</location>
        <location evidence="3">Flagellum axoneme</location>
    </subcellularLocation>
    <subcellularLocation>
        <location evidence="6">Cytoplasmic vesicle</location>
        <location evidence="6">Secretory vesicle</location>
        <location evidence="6">Acrosome</location>
    </subcellularLocation>
    <subcellularLocation>
        <location evidence="6">Golgi apparatus</location>
    </subcellularLocation>
    <subcellularLocation>
        <location evidence="6">Cytoplasm</location>
        <location evidence="6">Cytoskeleton</location>
    </subcellularLocation>
    <text evidence="6">Detected in the cytoplasm of round spermatids and in condensing spermatids. Localized to the central pair of the sperm flagellar axoneme. Colocalizes with SPAG6 on microtubules. Localizes to the manchette in elongating spermatids (PubMed:29690537).</text>
</comment>
<comment type="tissue specificity">
    <text evidence="3 5 6 7">Highly expressed in testis, round spermatids, testicular sperm, epididymal sperm and in condensing spermatids (at protein level) (PubMed:15827353, PubMed:29690537, PubMed:32988999). Expressed in organs that contain cilia-bearing cells including brain, oviduct, lung, and uterus (PubMed:15827353, PubMed:32988999). Expressed in articular cartilage and bone (PubMed:26017218).</text>
</comment>
<comment type="developmental stage">
    <text evidence="3">Expressed from day 16 when pachytene spermatocytes are present.</text>
</comment>
<comment type="disease">
    <text evidence="7">Defects in Spag17 are the cause of primary ciliary dyskinesia only (Pcdo) phenotype. Mice are generally viable to adulthood but have a significantly shortened lifespan, with chronic morbidity. Show neonatal progressive hydrocephalus, accumulation of mucus in the respiratory passages and male infertility.</text>
</comment>
<comment type="disruption phenotype">
    <text evidence="4 5 6">Deficient mice die within 12 hours of birth with severe defects in motile cilia (PubMed:23418344). Mice also have skeletal malformations (PubMed:26017218). Male mice are infertile because of a severe defect in spermatogenesis (PubMed:29690537). Spermatids display abnormally long manchette structures and defects in the morphology of the sperm head, acrosome, and tail (PubMed:29690537). Additionally, the transport of proteins along the manchette microtubules is disrupted in the elongating spermatids (PubMed:29690537).</text>
</comment>
<comment type="sequence caution" evidence="8">
    <conflict type="frameshift">
        <sequence resource="EMBL-CDS" id="AAS66754"/>
    </conflict>
</comment>
<comment type="sequence caution" evidence="8">
    <conflict type="miscellaneous discrepancy">
        <sequence resource="EMBL-CDS" id="AAV66533"/>
    </conflict>
    <text>Missing sequence in a highly repetitive region between exons 21 and 22.</text>
</comment>
<comment type="sequence caution" evidence="8">
    <conflict type="frameshift">
        <sequence resource="EMBL-CDS" id="BAC26566"/>
    </conflict>
</comment>
<comment type="sequence caution" evidence="8">
    <conflict type="erroneous initiation">
        <sequence resource="EMBL-CDS" id="BAE22947"/>
    </conflict>
    <text>Truncated N-terminus.</text>
</comment>
<feature type="chain" id="PRO_0000331446" description="Sperm-associated antigen 17">
    <location>
        <begin position="1"/>
        <end position="2320"/>
    </location>
</feature>
<feature type="region of interest" description="Disordered" evidence="2">
    <location>
        <begin position="139"/>
        <end position="211"/>
    </location>
</feature>
<feature type="region of interest" description="Disordered" evidence="2">
    <location>
        <begin position="388"/>
        <end position="407"/>
    </location>
</feature>
<feature type="region of interest" description="Disordered" evidence="2">
    <location>
        <begin position="682"/>
        <end position="739"/>
    </location>
</feature>
<feature type="region of interest" description="Disordered" evidence="2">
    <location>
        <begin position="894"/>
        <end position="928"/>
    </location>
</feature>
<feature type="region of interest" description="Disordered" evidence="2">
    <location>
        <begin position="950"/>
        <end position="1001"/>
    </location>
</feature>
<feature type="region of interest" description="Disordered" evidence="2">
    <location>
        <begin position="1084"/>
        <end position="1118"/>
    </location>
</feature>
<feature type="region of interest" description="Disordered" evidence="2">
    <location>
        <begin position="1191"/>
        <end position="1221"/>
    </location>
</feature>
<feature type="region of interest" description="Disordered" evidence="2">
    <location>
        <begin position="1334"/>
        <end position="1367"/>
    </location>
</feature>
<feature type="region of interest" description="Disordered" evidence="2">
    <location>
        <begin position="1393"/>
        <end position="1416"/>
    </location>
</feature>
<feature type="region of interest" description="Disordered" evidence="2">
    <location>
        <begin position="1983"/>
        <end position="2028"/>
    </location>
</feature>
<feature type="region of interest" description="Disordered" evidence="2">
    <location>
        <begin position="2080"/>
        <end position="2101"/>
    </location>
</feature>
<feature type="coiled-coil region" evidence="1">
    <location>
        <begin position="865"/>
        <end position="965"/>
    </location>
</feature>
<feature type="compositionally biased region" description="Basic and acidic residues" evidence="2">
    <location>
        <begin position="139"/>
        <end position="171"/>
    </location>
</feature>
<feature type="compositionally biased region" description="Basic and acidic residues" evidence="2">
    <location>
        <begin position="199"/>
        <end position="210"/>
    </location>
</feature>
<feature type="compositionally biased region" description="Polar residues" evidence="2">
    <location>
        <begin position="703"/>
        <end position="720"/>
    </location>
</feature>
<feature type="compositionally biased region" description="Basic and acidic residues" evidence="2">
    <location>
        <begin position="914"/>
        <end position="928"/>
    </location>
</feature>
<feature type="compositionally biased region" description="Basic and acidic residues" evidence="2">
    <location>
        <begin position="950"/>
        <end position="999"/>
    </location>
</feature>
<feature type="compositionally biased region" description="Acidic residues" evidence="2">
    <location>
        <begin position="1090"/>
        <end position="1103"/>
    </location>
</feature>
<feature type="compositionally biased region" description="Basic and acidic residues" evidence="2">
    <location>
        <begin position="1104"/>
        <end position="1118"/>
    </location>
</feature>
<feature type="compositionally biased region" description="Basic and acidic residues" evidence="2">
    <location>
        <begin position="1203"/>
        <end position="1221"/>
    </location>
</feature>
<feature type="compositionally biased region" description="Polar residues" evidence="2">
    <location>
        <begin position="2012"/>
        <end position="2028"/>
    </location>
</feature>
<feature type="compositionally biased region" description="Polar residues" evidence="2">
    <location>
        <begin position="2082"/>
        <end position="2094"/>
    </location>
</feature>
<feature type="sequence variant" description="In pcdo." evidence="7">
    <location>
        <begin position="1746"/>
        <end position="2320"/>
    </location>
</feature>
<feature type="sequence conflict" description="In Ref. 3; BAC26566." evidence="8" ref="3">
    <original>K</original>
    <variation>N</variation>
    <location>
        <position position="193"/>
    </location>
</feature>
<feature type="sequence conflict" description="In Ref. 3; BAC26566." ref="3">
    <original>T</original>
    <variation>S</variation>
    <location>
        <position position="381"/>
    </location>
</feature>
<feature type="sequence conflict" description="In Ref. 1; AAV66533/AAS66754 and 3; BAC26566." evidence="8" ref="1 3">
    <original>Y</original>
    <variation>C</variation>
    <location>
        <position position="788"/>
    </location>
</feature>
<feature type="sequence conflict" description="In Ref. 1; AAV66533." evidence="8" ref="1">
    <original>D</original>
    <variation>N</variation>
    <location>
        <position position="1629"/>
    </location>
</feature>
<feature type="sequence conflict" description="In Ref. 3; BAE22947." evidence="8" ref="3">
    <original>T</original>
    <variation>P</variation>
    <location>
        <position position="2029"/>
    </location>
</feature>
<feature type="sequence conflict" description="In Ref. 3; BAE22947." evidence="8" ref="3">
    <original>E</original>
    <variation>G</variation>
    <location>
        <position position="2082"/>
    </location>
</feature>
<feature type="sequence conflict" description="In Ref. 1; AAV66533." evidence="8" ref="1">
    <original>P</original>
    <variation>S</variation>
    <location>
        <position position="2212"/>
    </location>
</feature>
<dbReference type="EMBL" id="AY555275">
    <property type="protein sequence ID" value="AAS66754.1"/>
    <property type="status" value="ALT_FRAME"/>
    <property type="molecule type" value="mRNA"/>
</dbReference>
<dbReference type="EMBL" id="AY792594">
    <property type="protein sequence ID" value="AAV66533.1"/>
    <property type="status" value="ALT_SEQ"/>
    <property type="molecule type" value="mRNA"/>
</dbReference>
<dbReference type="EMBL" id="AC102209">
    <property type="status" value="NOT_ANNOTATED_CDS"/>
    <property type="molecule type" value="Genomic_DNA"/>
</dbReference>
<dbReference type="EMBL" id="AC167172">
    <property type="status" value="NOT_ANNOTATED_CDS"/>
    <property type="molecule type" value="Genomic_DNA"/>
</dbReference>
<dbReference type="EMBL" id="AL606749">
    <property type="status" value="NOT_ANNOTATED_CDS"/>
    <property type="molecule type" value="Genomic_DNA"/>
</dbReference>
<dbReference type="EMBL" id="AK016477">
    <property type="protein sequence ID" value="BAB30259.1"/>
    <property type="molecule type" value="mRNA"/>
</dbReference>
<dbReference type="EMBL" id="AK029691">
    <property type="protein sequence ID" value="BAC26566.1"/>
    <property type="status" value="ALT_FRAME"/>
    <property type="molecule type" value="mRNA"/>
</dbReference>
<dbReference type="EMBL" id="AK136364">
    <property type="protein sequence ID" value="BAE22947.1"/>
    <property type="status" value="ALT_INIT"/>
    <property type="molecule type" value="mRNA"/>
</dbReference>
<dbReference type="CCDS" id="CCDS57248.1"/>
<dbReference type="RefSeq" id="NP_083168.3">
    <property type="nucleotide sequence ID" value="NM_028892.4"/>
</dbReference>
<dbReference type="SMR" id="Q5S003"/>
<dbReference type="BioGRID" id="216691">
    <property type="interactions" value="5"/>
</dbReference>
<dbReference type="FunCoup" id="Q5S003">
    <property type="interactions" value="39"/>
</dbReference>
<dbReference type="IntAct" id="Q5S003">
    <property type="interactions" value="2"/>
</dbReference>
<dbReference type="MINT" id="Q5S003"/>
<dbReference type="STRING" id="10090.ENSMUSP00000134066"/>
<dbReference type="GlyGen" id="Q5S003">
    <property type="glycosylation" value="3 sites, 1 O-linked glycan (2 sites)"/>
</dbReference>
<dbReference type="iPTMnet" id="Q5S003"/>
<dbReference type="PhosphoSitePlus" id="Q5S003"/>
<dbReference type="SwissPalm" id="Q5S003"/>
<dbReference type="PaxDb" id="10090-ENSMUSP00000134066"/>
<dbReference type="ProteomicsDB" id="258720"/>
<dbReference type="Antibodypedia" id="33897">
    <property type="antibodies" value="31 antibodies from 7 providers"/>
</dbReference>
<dbReference type="Ensembl" id="ENSMUST00000164539.2">
    <property type="protein sequence ID" value="ENSMUSP00000134066.2"/>
    <property type="gene ID" value="ENSMUSG00000027867.11"/>
</dbReference>
<dbReference type="GeneID" id="74362"/>
<dbReference type="KEGG" id="mmu:74362"/>
<dbReference type="UCSC" id="uc012cus.1">
    <property type="organism name" value="mouse"/>
</dbReference>
<dbReference type="AGR" id="MGI:1921612"/>
<dbReference type="CTD" id="200162"/>
<dbReference type="MGI" id="MGI:1921612">
    <property type="gene designation" value="Spag17"/>
</dbReference>
<dbReference type="VEuPathDB" id="HostDB:ENSMUSG00000027867"/>
<dbReference type="eggNOG" id="ENOG502QSCB">
    <property type="taxonomic scope" value="Eukaryota"/>
</dbReference>
<dbReference type="GeneTree" id="ENSGT00390000013693"/>
<dbReference type="HOGENOM" id="CLU_001433_0_0_1"/>
<dbReference type="InParanoid" id="Q5S003"/>
<dbReference type="OMA" id="HYATVIT"/>
<dbReference type="OrthoDB" id="10257153at2759"/>
<dbReference type="PhylomeDB" id="Q5S003"/>
<dbReference type="TreeFam" id="TF328540"/>
<dbReference type="BioGRID-ORCS" id="74362">
    <property type="hits" value="4 hits in 77 CRISPR screens"/>
</dbReference>
<dbReference type="ChiTaRS" id="Spag17">
    <property type="organism name" value="mouse"/>
</dbReference>
<dbReference type="PRO" id="PR:Q5S003"/>
<dbReference type="Proteomes" id="UP000000589">
    <property type="component" value="Chromosome 3"/>
</dbReference>
<dbReference type="RNAct" id="Q5S003">
    <property type="molecule type" value="protein"/>
</dbReference>
<dbReference type="Bgee" id="ENSMUSG00000027867">
    <property type="expression patterns" value="Expressed in interventricular septum and 27 other cell types or tissues"/>
</dbReference>
<dbReference type="GO" id="GO:0001669">
    <property type="term" value="C:acrosomal vesicle"/>
    <property type="evidence" value="ECO:0000314"/>
    <property type="project" value="UniProtKB"/>
</dbReference>
<dbReference type="GO" id="GO:1990716">
    <property type="term" value="C:axonemal central apparatus"/>
    <property type="evidence" value="ECO:0000314"/>
    <property type="project" value="MGI"/>
</dbReference>
<dbReference type="GO" id="GO:0005737">
    <property type="term" value="C:cytoplasm"/>
    <property type="evidence" value="ECO:0000314"/>
    <property type="project" value="UniProtKB"/>
</dbReference>
<dbReference type="GO" id="GO:0005576">
    <property type="term" value="C:extracellular region"/>
    <property type="evidence" value="ECO:0007669"/>
    <property type="project" value="GOC"/>
</dbReference>
<dbReference type="GO" id="GO:0005794">
    <property type="term" value="C:Golgi apparatus"/>
    <property type="evidence" value="ECO:0000314"/>
    <property type="project" value="UniProtKB"/>
</dbReference>
<dbReference type="GO" id="GO:0002177">
    <property type="term" value="C:manchette"/>
    <property type="evidence" value="ECO:0000314"/>
    <property type="project" value="UniProtKB"/>
</dbReference>
<dbReference type="GO" id="GO:0005874">
    <property type="term" value="C:microtubule"/>
    <property type="evidence" value="ECO:0007669"/>
    <property type="project" value="UniProtKB-KW"/>
</dbReference>
<dbReference type="GO" id="GO:0031514">
    <property type="term" value="C:motile cilium"/>
    <property type="evidence" value="ECO:0007669"/>
    <property type="project" value="UniProtKB-KW"/>
</dbReference>
<dbReference type="GO" id="GO:1904158">
    <property type="term" value="P:axonemal central apparatus assembly"/>
    <property type="evidence" value="ECO:0000315"/>
    <property type="project" value="MGI"/>
</dbReference>
<dbReference type="GO" id="GO:0003351">
    <property type="term" value="P:epithelial cilium movement involved in extracellular fluid movement"/>
    <property type="evidence" value="ECO:0000315"/>
    <property type="project" value="MGI"/>
</dbReference>
<dbReference type="GO" id="GO:0051649">
    <property type="term" value="P:establishment of localization in cell"/>
    <property type="evidence" value="ECO:0000315"/>
    <property type="project" value="MGI"/>
</dbReference>
<dbReference type="GO" id="GO:1990953">
    <property type="term" value="P:intramanchette transport"/>
    <property type="evidence" value="ECO:0000315"/>
    <property type="project" value="UniProtKB"/>
</dbReference>
<dbReference type="GO" id="GO:1905198">
    <property type="term" value="P:manchette assembly"/>
    <property type="evidence" value="ECO:0000315"/>
    <property type="project" value="UniProtKB"/>
</dbReference>
<dbReference type="GO" id="GO:0044458">
    <property type="term" value="P:motile cilium assembly"/>
    <property type="evidence" value="ECO:0000315"/>
    <property type="project" value="UniProtKB"/>
</dbReference>
<dbReference type="GO" id="GO:0007283">
    <property type="term" value="P:spermatogenesis"/>
    <property type="evidence" value="ECO:0000315"/>
    <property type="project" value="UniProtKB"/>
</dbReference>
<dbReference type="InterPro" id="IPR026173">
    <property type="entry name" value="SPAG17"/>
</dbReference>
<dbReference type="PANTHER" id="PTHR21963">
    <property type="entry name" value="PF6"/>
    <property type="match status" value="1"/>
</dbReference>
<dbReference type="PANTHER" id="PTHR21963:SF1">
    <property type="entry name" value="SPERM-ASSOCIATED ANTIGEN 17"/>
    <property type="match status" value="1"/>
</dbReference>
<dbReference type="Pfam" id="PF14874">
    <property type="entry name" value="PapD-like"/>
    <property type="match status" value="1"/>
</dbReference>
<proteinExistence type="evidence at protein level"/>
<evidence type="ECO:0000255" key="1"/>
<evidence type="ECO:0000256" key="2">
    <source>
        <dbReference type="SAM" id="MobiDB-lite"/>
    </source>
</evidence>
<evidence type="ECO:0000269" key="3">
    <source>
    </source>
</evidence>
<evidence type="ECO:0000269" key="4">
    <source>
    </source>
</evidence>
<evidence type="ECO:0000269" key="5">
    <source>
    </source>
</evidence>
<evidence type="ECO:0000269" key="6">
    <source>
    </source>
</evidence>
<evidence type="ECO:0000269" key="7">
    <source>
    </source>
</evidence>
<evidence type="ECO:0000305" key="8"/>
<evidence type="ECO:0000312" key="9">
    <source>
        <dbReference type="Proteomes" id="UP000000589"/>
    </source>
</evidence>
<keyword id="KW-0966">Cell projection</keyword>
<keyword id="KW-1186">Ciliopathy</keyword>
<keyword id="KW-0969">Cilium</keyword>
<keyword id="KW-0970">Cilium biogenesis/degradation</keyword>
<keyword id="KW-0175">Coiled coil</keyword>
<keyword id="KW-0963">Cytoplasm</keyword>
<keyword id="KW-0968">Cytoplasmic vesicle</keyword>
<keyword id="KW-0206">Cytoskeleton</keyword>
<keyword id="KW-0221">Differentiation</keyword>
<keyword id="KW-0282">Flagellum</keyword>
<keyword id="KW-0333">Golgi apparatus</keyword>
<keyword id="KW-0493">Microtubule</keyword>
<keyword id="KW-0990">Primary ciliary dyskinesia</keyword>
<keyword id="KW-1185">Reference proteome</keyword>
<keyword id="KW-0744">Spermatogenesis</keyword>
<sequence>MAPKKEKPTGSANYKIWEPSLIAAHLNQNDWKASIAFVVGNRVEDDLLIHALDLAVRLPQRKLFSIVSWEDILQQMDEIQSLAESASAKKGKKPTSVNLPLHYEVFLAAKIIMESGEKLTLPLIGKLLKCQLLHIKSKDQQRRENEKKMVEERTKSEKDKGKGKSPKEKKVASAKPGKGKSKDQPEATVTVRKTTQLKRRGEDDEAKSYIDDEPDDGAQYYIIVVGFNNPQLLAIMTELGIPITSVIKISSENYEPLQTHLAAVRQQQEAVLQPEDIEAEKLKRKNSIKELEVFWKYLEPILNNEKLEIHLFDVARLQYMVKATYFPSDWSDNEQMLALGTEIFENIACLMYDSLDWKRQHHHYLQSMQLINVPQVVSEKTVLEAITIPEPPPSTAPAPTGKKKAQYEESHAPPTVAFIITTEVDMRYYNDLLNPIPEEFISVSLILHCMVEQVVATEEDLIPPSLVEPAPRADGLDYRIAAHIVSILPSLCLSEKEKKNLREIFLTEGESESKALPKGPLLLNYHDAHAHKKYALKDQKNFDPVQVEQEMQSKLPLWEFLQFPLPPPWNSTKRLATIHELMHFCTNEVLSWNEVERAFKVFTFESLKLSEVDEEGRLKPTETTSDTDVENFNIPWDNPARFAKLIRQRYIHRMSMQKAPPVVVEIENTERTLFVNKNFAKAEQDAQGDENSPNSDEPDAISVTGSTSNSTKPWNSSNRQFSEKETSGSMWPQPESMDQTMDTEIKDDAATKDDSPEKKPKKMVVEADIEDIKKTQQRSLMDWSFTEYFQPKVLLQVLQEAHQQYRCVDSYYHTQDNSLLLVFHNPMNLQRLQCEHWNIALHSNVGFRNYLELVAKSIEDWVTQEEAKYQEAKMAEELNRIRIELELKATVKTSASKIPGPKRSKTNKVSSKTELSDQEKDKEKEKDKIPFVLEGSLKAWKEEQERLAEEERLKEEKKAEKKGKDTGKKKGKDKADKDDAKALKKKSSSKEKPKEEPAKTLEVIEETAPLPVPEVVYPFRGYNMGDIPIQISGTNYYLYPSDGGQIEVEKTRFERGSTFIKVKVKKDKHNFIIHLKDPKEIVKKEKEEKNSEEEEEEEEEKEEVEEKKPKEGEEEKVKQKVEMKRAQIEKEAVSKFGSFSATLENGICLSISYYGSNGMAPEVINSELEAMMNIPSAMTATVVPAVVTVPQGKGKAKPKGKEKHKDSIKEEELPKEEEKKNHIQEEVEPEIVIQESPPYVPTFQNLNVSCPSGLLLTFIGQESTDYSIVDEEPTRNLMIRQSYPQRLKHYEFYKAVMPPLEQEASRVVTSQGTVIKYMLDGSTQILFADGAVSSSPDSGPVYTSPELPTSPHNGDLVDSASQPKSETGPEIIITKKGKGHKNQTVANKSETHDIIPEVPPPTPVESHIGTWFTTTPDGRRIGTKGLEKIEDLKPYLFFQATDPINGTVMTTREDKVIIVEKKDGTRVVDHADGTRITTFYQVYEDHITPSNDEETTEGPRTVTRQVKCMRIESSHYATIITNCEDSSCCATFGDGTSIIAKPQGSYQVLPPNTGCLYIDKDCSATYCHESSNNLYHPFQKREQLRASRYIMKHTSEVICEVQDPEGNTFQVMADGSVSTTLPKKKLEDDFNVQMEGYESLSSLHLEKNHMQIYGEHVPRFFVVYTDGSGVELLRDSDIEEYLSLAYGESTTVVLQEPVQEYPGALSITVLRPFHEASQWIMKKELDTIVPPNLQSRSWERFPSVEKKTPGPPFGTQIWKGLSIGSKQLTNIPAPILEGPKVLQMRQFIQHEVIKNEVKLKLQISLKDYINHILKKEDELQEMTVKDSRTEEERGNAADLLKLVMSFPKMEETTKSHMTKVAAHLTVLFKQSMASAPKCSPDSYSKEFLEKKWRSLSQGTSWKEKLEQQRNNIKKTQSYLMQIKTKEVTPYFKSELSSLFKSKYDYLEKFSKSLPPFVKKNEAKLMTAVPDLYSDSTLTVDTEKEASNTHPLLNQEVAENIQESPREKETEYVNKSLQTSSSQNQYENVTISPKESVYQSQTEIETKDTKESAIQNFTEKFKKYTKKSASQNEIEDLIKSTKESVSQRQTENVTRPPTEEPDIYMPIKIPTQSLLQDVTGQARKEKVRLPYYMMSSKPKSQPYAKVEDPVGGRVNTSSIASAAMYNPNASPFGFHLLPPSVKFGVLKEGHTYATIVKLKNVGVDFCRFRVKQPPPSTGLKVTYKPGPVAAGLQAELKVELFAMAVGEDGAKGSAHISHNIEIMTEHDVLFLPVEATVLTSSNYDNRPKNLPQGKENPMVFRTSTISSSSLGVVMSQKATHH</sequence>